<proteinExistence type="inferred from homology"/>
<evidence type="ECO:0000255" key="1">
    <source>
        <dbReference type="HAMAP-Rule" id="MF_00139"/>
    </source>
</evidence>
<evidence type="ECO:0000255" key="2">
    <source>
        <dbReference type="PROSITE-ProRule" id="PRU01202"/>
    </source>
</evidence>
<name>PUR9_STRU0</name>
<dbReference type="EC" id="2.1.2.3" evidence="1"/>
<dbReference type="EC" id="3.5.4.10" evidence="1"/>
<dbReference type="EMBL" id="AM946015">
    <property type="protein sequence ID" value="CAR40373.1"/>
    <property type="molecule type" value="Genomic_DNA"/>
</dbReference>
<dbReference type="RefSeq" id="WP_012657600.1">
    <property type="nucleotide sequence ID" value="NC_012004.1"/>
</dbReference>
<dbReference type="SMR" id="B9DSR6"/>
<dbReference type="STRING" id="218495.SUB0030"/>
<dbReference type="KEGG" id="sub:SUB0030"/>
<dbReference type="eggNOG" id="COG0138">
    <property type="taxonomic scope" value="Bacteria"/>
</dbReference>
<dbReference type="HOGENOM" id="CLU_016316_5_2_9"/>
<dbReference type="OrthoDB" id="9802065at2"/>
<dbReference type="UniPathway" id="UPA00074">
    <property type="reaction ID" value="UER00133"/>
</dbReference>
<dbReference type="UniPathway" id="UPA00074">
    <property type="reaction ID" value="UER00135"/>
</dbReference>
<dbReference type="Proteomes" id="UP000000449">
    <property type="component" value="Chromosome"/>
</dbReference>
<dbReference type="GO" id="GO:0005829">
    <property type="term" value="C:cytosol"/>
    <property type="evidence" value="ECO:0007669"/>
    <property type="project" value="TreeGrafter"/>
</dbReference>
<dbReference type="GO" id="GO:0003937">
    <property type="term" value="F:IMP cyclohydrolase activity"/>
    <property type="evidence" value="ECO:0007669"/>
    <property type="project" value="UniProtKB-UniRule"/>
</dbReference>
<dbReference type="GO" id="GO:0004643">
    <property type="term" value="F:phosphoribosylaminoimidazolecarboxamide formyltransferase activity"/>
    <property type="evidence" value="ECO:0007669"/>
    <property type="project" value="UniProtKB-UniRule"/>
</dbReference>
<dbReference type="GO" id="GO:0006189">
    <property type="term" value="P:'de novo' IMP biosynthetic process"/>
    <property type="evidence" value="ECO:0007669"/>
    <property type="project" value="UniProtKB-UniRule"/>
</dbReference>
<dbReference type="CDD" id="cd01421">
    <property type="entry name" value="IMPCH"/>
    <property type="match status" value="1"/>
</dbReference>
<dbReference type="FunFam" id="3.40.140.20:FF:000001">
    <property type="entry name" value="Bifunctional purine biosynthesis protein PurH"/>
    <property type="match status" value="1"/>
</dbReference>
<dbReference type="FunFam" id="3.40.140.20:FF:000002">
    <property type="entry name" value="Bifunctional purine biosynthesis protein PurH"/>
    <property type="match status" value="1"/>
</dbReference>
<dbReference type="FunFam" id="3.40.50.1380:FF:000001">
    <property type="entry name" value="Bifunctional purine biosynthesis protein PurH"/>
    <property type="match status" value="1"/>
</dbReference>
<dbReference type="Gene3D" id="3.40.140.20">
    <property type="match status" value="2"/>
</dbReference>
<dbReference type="Gene3D" id="3.40.50.1380">
    <property type="entry name" value="Methylglyoxal synthase-like domain"/>
    <property type="match status" value="1"/>
</dbReference>
<dbReference type="HAMAP" id="MF_00139">
    <property type="entry name" value="PurH"/>
    <property type="match status" value="1"/>
</dbReference>
<dbReference type="InterPro" id="IPR024051">
    <property type="entry name" value="AICAR_Tfase_dup_dom_sf"/>
</dbReference>
<dbReference type="InterPro" id="IPR016193">
    <property type="entry name" value="Cytidine_deaminase-like"/>
</dbReference>
<dbReference type="InterPro" id="IPR011607">
    <property type="entry name" value="MGS-like_dom"/>
</dbReference>
<dbReference type="InterPro" id="IPR036914">
    <property type="entry name" value="MGS-like_dom_sf"/>
</dbReference>
<dbReference type="InterPro" id="IPR002695">
    <property type="entry name" value="PurH-like"/>
</dbReference>
<dbReference type="NCBIfam" id="NF002049">
    <property type="entry name" value="PRK00881.1"/>
    <property type="match status" value="1"/>
</dbReference>
<dbReference type="NCBIfam" id="TIGR00355">
    <property type="entry name" value="purH"/>
    <property type="match status" value="1"/>
</dbReference>
<dbReference type="PANTHER" id="PTHR11692:SF0">
    <property type="entry name" value="BIFUNCTIONAL PURINE BIOSYNTHESIS PROTEIN ATIC"/>
    <property type="match status" value="1"/>
</dbReference>
<dbReference type="PANTHER" id="PTHR11692">
    <property type="entry name" value="BIFUNCTIONAL PURINE BIOSYNTHESIS PROTEIN PURH"/>
    <property type="match status" value="1"/>
</dbReference>
<dbReference type="Pfam" id="PF01808">
    <property type="entry name" value="AICARFT_IMPCHas"/>
    <property type="match status" value="1"/>
</dbReference>
<dbReference type="Pfam" id="PF02142">
    <property type="entry name" value="MGS"/>
    <property type="match status" value="1"/>
</dbReference>
<dbReference type="PIRSF" id="PIRSF000414">
    <property type="entry name" value="AICARFT_IMPCHas"/>
    <property type="match status" value="1"/>
</dbReference>
<dbReference type="SMART" id="SM00798">
    <property type="entry name" value="AICARFT_IMPCHas"/>
    <property type="match status" value="1"/>
</dbReference>
<dbReference type="SMART" id="SM00851">
    <property type="entry name" value="MGS"/>
    <property type="match status" value="1"/>
</dbReference>
<dbReference type="SUPFAM" id="SSF53927">
    <property type="entry name" value="Cytidine deaminase-like"/>
    <property type="match status" value="1"/>
</dbReference>
<dbReference type="SUPFAM" id="SSF52335">
    <property type="entry name" value="Methylglyoxal synthase-like"/>
    <property type="match status" value="1"/>
</dbReference>
<dbReference type="PROSITE" id="PS51855">
    <property type="entry name" value="MGS"/>
    <property type="match status" value="1"/>
</dbReference>
<comment type="catalytic activity">
    <reaction evidence="1">
        <text>(6R)-10-formyltetrahydrofolate + 5-amino-1-(5-phospho-beta-D-ribosyl)imidazole-4-carboxamide = 5-formamido-1-(5-phospho-D-ribosyl)imidazole-4-carboxamide + (6S)-5,6,7,8-tetrahydrofolate</text>
        <dbReference type="Rhea" id="RHEA:22192"/>
        <dbReference type="ChEBI" id="CHEBI:57453"/>
        <dbReference type="ChEBI" id="CHEBI:58467"/>
        <dbReference type="ChEBI" id="CHEBI:58475"/>
        <dbReference type="ChEBI" id="CHEBI:195366"/>
        <dbReference type="EC" id="2.1.2.3"/>
    </reaction>
</comment>
<comment type="catalytic activity">
    <reaction evidence="1">
        <text>IMP + H2O = 5-formamido-1-(5-phospho-D-ribosyl)imidazole-4-carboxamide</text>
        <dbReference type="Rhea" id="RHEA:18445"/>
        <dbReference type="ChEBI" id="CHEBI:15377"/>
        <dbReference type="ChEBI" id="CHEBI:58053"/>
        <dbReference type="ChEBI" id="CHEBI:58467"/>
        <dbReference type="EC" id="3.5.4.10"/>
    </reaction>
</comment>
<comment type="pathway">
    <text evidence="1">Purine metabolism; IMP biosynthesis via de novo pathway; 5-formamido-1-(5-phospho-D-ribosyl)imidazole-4-carboxamide from 5-amino-1-(5-phospho-D-ribosyl)imidazole-4-carboxamide (10-formyl THF route): step 1/1.</text>
</comment>
<comment type="pathway">
    <text evidence="1">Purine metabolism; IMP biosynthesis via de novo pathway; IMP from 5-formamido-1-(5-phospho-D-ribosyl)imidazole-4-carboxamide: step 1/1.</text>
</comment>
<comment type="domain">
    <text evidence="1">The IMP cyclohydrolase activity resides in the N-terminal region.</text>
</comment>
<comment type="similarity">
    <text evidence="1">Belongs to the PurH family.</text>
</comment>
<sequence>MTKRALISVSDKAGIVDFAQELKKLGWDIISTGGTKTALDTAGIKTIAIDDITGFPEMMDGRVKTLHPNIHGGLLARRDLDTHLKAAQENGIELIDLVVVNLYPFKETILRPDVTYAQAVENIDIGGPSMLRSAAKNHASVTVVVDPSDYERVLAELTEIGETTYETRQALAAKVFRHTAAYDALIAEYFTAQVGETKPEKLTLTYDLKQEMRYGENPQQAADFYQKALPTDYSIASAKQLNGKELSFNNIRDADAAIRIIRDFKERPTVVALKHMNPCGIGQADTIEKAWDYAYEADSVSIFGGIVVLNREVDKATAEKMHPIFLEIIIAPSYSDEALAILTNKKKNLRILQLPFEGQAASEIEAEYTGVVGGMLVQNQDVIEEKADAWEVVTERQPSDDEKEALEFAWRAIKYVKSNGILIANNHMTLGVGPGQTNRVASVRIAIEQAKDRLEGAALASDAFFPFADNIEEIAAAGIKAIIQPGGSVRDQESIDAANKHGIAMIFTGVRHFRH</sequence>
<protein>
    <recommendedName>
        <fullName evidence="1">Bifunctional purine biosynthesis protein PurH</fullName>
    </recommendedName>
    <domain>
        <recommendedName>
            <fullName evidence="1">Phosphoribosylaminoimidazolecarboxamide formyltransferase</fullName>
            <ecNumber evidence="1">2.1.2.3</ecNumber>
        </recommendedName>
        <alternativeName>
            <fullName evidence="1">AICAR transformylase</fullName>
        </alternativeName>
    </domain>
    <domain>
        <recommendedName>
            <fullName evidence="1">IMP cyclohydrolase</fullName>
            <ecNumber evidence="1">3.5.4.10</ecNumber>
        </recommendedName>
        <alternativeName>
            <fullName evidence="1">ATIC</fullName>
        </alternativeName>
        <alternativeName>
            <fullName evidence="1">IMP synthase</fullName>
        </alternativeName>
        <alternativeName>
            <fullName evidence="1">Inosinicase</fullName>
        </alternativeName>
    </domain>
</protein>
<keyword id="KW-0378">Hydrolase</keyword>
<keyword id="KW-0511">Multifunctional enzyme</keyword>
<keyword id="KW-0658">Purine biosynthesis</keyword>
<keyword id="KW-1185">Reference proteome</keyword>
<keyword id="KW-0808">Transferase</keyword>
<accession>B9DSR6</accession>
<gene>
    <name evidence="1" type="primary">purH</name>
    <name type="ordered locus">SUB0030</name>
</gene>
<organism>
    <name type="scientific">Streptococcus uberis (strain ATCC BAA-854 / 0140J)</name>
    <dbReference type="NCBI Taxonomy" id="218495"/>
    <lineage>
        <taxon>Bacteria</taxon>
        <taxon>Bacillati</taxon>
        <taxon>Bacillota</taxon>
        <taxon>Bacilli</taxon>
        <taxon>Lactobacillales</taxon>
        <taxon>Streptococcaceae</taxon>
        <taxon>Streptococcus</taxon>
    </lineage>
</organism>
<reference key="1">
    <citation type="journal article" date="2009" name="BMC Genomics">
        <title>Evidence for niche adaptation in the genome of the bovine pathogen Streptococcus uberis.</title>
        <authorList>
            <person name="Ward P.N."/>
            <person name="Holden M.T.G."/>
            <person name="Leigh J.A."/>
            <person name="Lennard N."/>
            <person name="Bignell A."/>
            <person name="Barron A."/>
            <person name="Clark L."/>
            <person name="Quail M.A."/>
            <person name="Woodward J."/>
            <person name="Barrell B.G."/>
            <person name="Egan S.A."/>
            <person name="Field T.R."/>
            <person name="Maskell D."/>
            <person name="Kehoe M."/>
            <person name="Dowson C.G."/>
            <person name="Chanter N."/>
            <person name="Whatmore A.M."/>
            <person name="Bentley S.D."/>
            <person name="Parkhill J."/>
        </authorList>
    </citation>
    <scope>NUCLEOTIDE SEQUENCE [LARGE SCALE GENOMIC DNA]</scope>
    <source>
        <strain>ATCC BAA-854 / 0140J</strain>
    </source>
</reference>
<feature type="chain" id="PRO_1000122975" description="Bifunctional purine biosynthesis protein PurH">
    <location>
        <begin position="1"/>
        <end position="515"/>
    </location>
</feature>
<feature type="domain" description="MGS-like" evidence="2">
    <location>
        <begin position="1"/>
        <end position="145"/>
    </location>
</feature>